<gene>
    <name evidence="1" type="primary">queC</name>
    <name type="ordered locus">Gmet_3075</name>
</gene>
<reference key="1">
    <citation type="journal article" date="2009" name="BMC Microbiol.">
        <title>The genome sequence of Geobacter metallireducens: features of metabolism, physiology and regulation common and dissimilar to Geobacter sulfurreducens.</title>
        <authorList>
            <person name="Aklujkar M."/>
            <person name="Krushkal J."/>
            <person name="DiBartolo G."/>
            <person name="Lapidus A."/>
            <person name="Land M.L."/>
            <person name="Lovley D.R."/>
        </authorList>
    </citation>
    <scope>NUCLEOTIDE SEQUENCE [LARGE SCALE GENOMIC DNA]</scope>
    <source>
        <strain>ATCC 53774 / DSM 7210 / GS-15</strain>
    </source>
</reference>
<feature type="chain" id="PRO_0000246845" description="7-cyano-7-deazaguanine synthase">
    <location>
        <begin position="1"/>
        <end position="237"/>
    </location>
</feature>
<feature type="binding site" evidence="1">
    <location>
        <begin position="9"/>
        <end position="19"/>
    </location>
    <ligand>
        <name>ATP</name>
        <dbReference type="ChEBI" id="CHEBI:30616"/>
    </ligand>
</feature>
<feature type="binding site" evidence="1">
    <location>
        <position position="189"/>
    </location>
    <ligand>
        <name>Zn(2+)</name>
        <dbReference type="ChEBI" id="CHEBI:29105"/>
    </ligand>
</feature>
<feature type="binding site" evidence="1">
    <location>
        <position position="199"/>
    </location>
    <ligand>
        <name>Zn(2+)</name>
        <dbReference type="ChEBI" id="CHEBI:29105"/>
    </ligand>
</feature>
<feature type="binding site" evidence="1">
    <location>
        <position position="202"/>
    </location>
    <ligand>
        <name>Zn(2+)</name>
        <dbReference type="ChEBI" id="CHEBI:29105"/>
    </ligand>
</feature>
<feature type="binding site" evidence="1">
    <location>
        <position position="205"/>
    </location>
    <ligand>
        <name>Zn(2+)</name>
        <dbReference type="ChEBI" id="CHEBI:29105"/>
    </ligand>
</feature>
<accession>Q39R35</accession>
<protein>
    <recommendedName>
        <fullName evidence="1">7-cyano-7-deazaguanine synthase</fullName>
        <ecNumber evidence="1">6.3.4.20</ecNumber>
    </recommendedName>
    <alternativeName>
        <fullName evidence="1">7-cyano-7-carbaguanine synthase</fullName>
    </alternativeName>
    <alternativeName>
        <fullName evidence="1">PreQ(0) synthase</fullName>
    </alternativeName>
    <alternativeName>
        <fullName evidence="1">Queuosine biosynthesis protein QueC</fullName>
    </alternativeName>
</protein>
<organism>
    <name type="scientific">Geobacter metallireducens (strain ATCC 53774 / DSM 7210 / GS-15)</name>
    <dbReference type="NCBI Taxonomy" id="269799"/>
    <lineage>
        <taxon>Bacteria</taxon>
        <taxon>Pseudomonadati</taxon>
        <taxon>Thermodesulfobacteriota</taxon>
        <taxon>Desulfuromonadia</taxon>
        <taxon>Geobacterales</taxon>
        <taxon>Geobacteraceae</taxon>
        <taxon>Geobacter</taxon>
    </lineage>
</organism>
<sequence>MHKKAVVLYSGGLDSTTCLAIARAEGYEPYAMSFSYGQRHSVELEQAKRNARPMGAVDHLVVEFDYRQVGGSALTSDIAVPKEGVGSDIPVTYVPARNTVFLSFALGWAEVLGAFDIFIGVNALDYSGYPDCRPEYIAAFEAMANLATKAGVEGKGRFRIHTPLIHLTKAEIIRKGLSLGVDYGRTHSCYDPTPEGLACGLCDSCRLRLKGFAEAGVADPVAYATIKNPEVRSQESE</sequence>
<keyword id="KW-0067">ATP-binding</keyword>
<keyword id="KW-0436">Ligase</keyword>
<keyword id="KW-0479">Metal-binding</keyword>
<keyword id="KW-0547">Nucleotide-binding</keyword>
<keyword id="KW-0671">Queuosine biosynthesis</keyword>
<keyword id="KW-1185">Reference proteome</keyword>
<keyword id="KW-0862">Zinc</keyword>
<proteinExistence type="inferred from homology"/>
<dbReference type="EC" id="6.3.4.20" evidence="1"/>
<dbReference type="EMBL" id="CP000148">
    <property type="protein sequence ID" value="ABB33289.1"/>
    <property type="molecule type" value="Genomic_DNA"/>
</dbReference>
<dbReference type="RefSeq" id="WP_004513634.1">
    <property type="nucleotide sequence ID" value="NC_007517.1"/>
</dbReference>
<dbReference type="SMR" id="Q39R35"/>
<dbReference type="STRING" id="269799.Gmet_3075"/>
<dbReference type="KEGG" id="gme:Gmet_3075"/>
<dbReference type="eggNOG" id="COG0603">
    <property type="taxonomic scope" value="Bacteria"/>
</dbReference>
<dbReference type="HOGENOM" id="CLU_081854_1_1_7"/>
<dbReference type="UniPathway" id="UPA00391"/>
<dbReference type="Proteomes" id="UP000007073">
    <property type="component" value="Chromosome"/>
</dbReference>
<dbReference type="GO" id="GO:0005524">
    <property type="term" value="F:ATP binding"/>
    <property type="evidence" value="ECO:0007669"/>
    <property type="project" value="UniProtKB-UniRule"/>
</dbReference>
<dbReference type="GO" id="GO:0016879">
    <property type="term" value="F:ligase activity, forming carbon-nitrogen bonds"/>
    <property type="evidence" value="ECO:0007669"/>
    <property type="project" value="UniProtKB-UniRule"/>
</dbReference>
<dbReference type="GO" id="GO:0008270">
    <property type="term" value="F:zinc ion binding"/>
    <property type="evidence" value="ECO:0007669"/>
    <property type="project" value="UniProtKB-UniRule"/>
</dbReference>
<dbReference type="GO" id="GO:0008616">
    <property type="term" value="P:queuosine biosynthetic process"/>
    <property type="evidence" value="ECO:0007669"/>
    <property type="project" value="UniProtKB-UniRule"/>
</dbReference>
<dbReference type="CDD" id="cd01995">
    <property type="entry name" value="QueC-like"/>
    <property type="match status" value="1"/>
</dbReference>
<dbReference type="FunFam" id="3.40.50.620:FF:000131">
    <property type="entry name" value="7-cyano-7-deazaguanine synthase"/>
    <property type="match status" value="1"/>
</dbReference>
<dbReference type="Gene3D" id="3.40.50.620">
    <property type="entry name" value="HUPs"/>
    <property type="match status" value="1"/>
</dbReference>
<dbReference type="HAMAP" id="MF_01633">
    <property type="entry name" value="QueC"/>
    <property type="match status" value="1"/>
</dbReference>
<dbReference type="InterPro" id="IPR018317">
    <property type="entry name" value="QueC"/>
</dbReference>
<dbReference type="InterPro" id="IPR014729">
    <property type="entry name" value="Rossmann-like_a/b/a_fold"/>
</dbReference>
<dbReference type="NCBIfam" id="TIGR00364">
    <property type="entry name" value="7-cyano-7-deazaguanine synthase QueC"/>
    <property type="match status" value="1"/>
</dbReference>
<dbReference type="PANTHER" id="PTHR42914">
    <property type="entry name" value="7-CYANO-7-DEAZAGUANINE SYNTHASE"/>
    <property type="match status" value="1"/>
</dbReference>
<dbReference type="PANTHER" id="PTHR42914:SF1">
    <property type="entry name" value="7-CYANO-7-DEAZAGUANINE SYNTHASE"/>
    <property type="match status" value="1"/>
</dbReference>
<dbReference type="Pfam" id="PF06508">
    <property type="entry name" value="QueC"/>
    <property type="match status" value="1"/>
</dbReference>
<dbReference type="PIRSF" id="PIRSF006293">
    <property type="entry name" value="ExsB"/>
    <property type="match status" value="1"/>
</dbReference>
<dbReference type="SUPFAM" id="SSF52402">
    <property type="entry name" value="Adenine nucleotide alpha hydrolases-like"/>
    <property type="match status" value="1"/>
</dbReference>
<evidence type="ECO:0000255" key="1">
    <source>
        <dbReference type="HAMAP-Rule" id="MF_01633"/>
    </source>
</evidence>
<name>QUEC_GEOMG</name>
<comment type="function">
    <text evidence="1">Catalyzes the ATP-dependent conversion of 7-carboxy-7-deazaguanine (CDG) to 7-cyano-7-deazaguanine (preQ(0)).</text>
</comment>
<comment type="catalytic activity">
    <reaction evidence="1">
        <text>7-carboxy-7-deazaguanine + NH4(+) + ATP = 7-cyano-7-deazaguanine + ADP + phosphate + H2O + H(+)</text>
        <dbReference type="Rhea" id="RHEA:27982"/>
        <dbReference type="ChEBI" id="CHEBI:15377"/>
        <dbReference type="ChEBI" id="CHEBI:15378"/>
        <dbReference type="ChEBI" id="CHEBI:28938"/>
        <dbReference type="ChEBI" id="CHEBI:30616"/>
        <dbReference type="ChEBI" id="CHEBI:43474"/>
        <dbReference type="ChEBI" id="CHEBI:45075"/>
        <dbReference type="ChEBI" id="CHEBI:61036"/>
        <dbReference type="ChEBI" id="CHEBI:456216"/>
        <dbReference type="EC" id="6.3.4.20"/>
    </reaction>
</comment>
<comment type="cofactor">
    <cofactor evidence="1">
        <name>Zn(2+)</name>
        <dbReference type="ChEBI" id="CHEBI:29105"/>
    </cofactor>
    <text evidence="1">Binds 1 zinc ion per subunit.</text>
</comment>
<comment type="pathway">
    <text evidence="1">Purine metabolism; 7-cyano-7-deazaguanine biosynthesis.</text>
</comment>
<comment type="similarity">
    <text evidence="1">Belongs to the QueC family.</text>
</comment>